<dbReference type="EC" id="3.4.24.59"/>
<dbReference type="EMBL" id="AE017342">
    <property type="protein sequence ID" value="AAW41837.2"/>
    <property type="molecule type" value="Genomic_DNA"/>
</dbReference>
<dbReference type="RefSeq" id="XP_569144.1">
    <property type="nucleotide sequence ID" value="XM_569144.1"/>
</dbReference>
<dbReference type="SMR" id="P0CQ20"/>
<dbReference type="FunCoup" id="P0CQ20">
    <property type="interactions" value="342"/>
</dbReference>
<dbReference type="PaxDb" id="214684-P0CQ20"/>
<dbReference type="EnsemblFungi" id="AAW41837">
    <property type="protein sequence ID" value="AAW41837"/>
    <property type="gene ID" value="CNB02140"/>
</dbReference>
<dbReference type="GeneID" id="3255573"/>
<dbReference type="KEGG" id="cne:CNB02140"/>
<dbReference type="VEuPathDB" id="FungiDB:CNB02140"/>
<dbReference type="eggNOG" id="KOG2090">
    <property type="taxonomic scope" value="Eukaryota"/>
</dbReference>
<dbReference type="InParanoid" id="P0CQ20"/>
<dbReference type="OrthoDB" id="17530at2759"/>
<dbReference type="Proteomes" id="UP000002149">
    <property type="component" value="Chromosome 2"/>
</dbReference>
<dbReference type="GO" id="GO:0005759">
    <property type="term" value="C:mitochondrial matrix"/>
    <property type="evidence" value="ECO:0007669"/>
    <property type="project" value="UniProtKB-SubCell"/>
</dbReference>
<dbReference type="GO" id="GO:0005739">
    <property type="term" value="C:mitochondrion"/>
    <property type="evidence" value="ECO:0000318"/>
    <property type="project" value="GO_Central"/>
</dbReference>
<dbReference type="GO" id="GO:0046872">
    <property type="term" value="F:metal ion binding"/>
    <property type="evidence" value="ECO:0007669"/>
    <property type="project" value="UniProtKB-KW"/>
</dbReference>
<dbReference type="GO" id="GO:0004222">
    <property type="term" value="F:metalloendopeptidase activity"/>
    <property type="evidence" value="ECO:0000318"/>
    <property type="project" value="GO_Central"/>
</dbReference>
<dbReference type="GO" id="GO:0006518">
    <property type="term" value="P:peptide metabolic process"/>
    <property type="evidence" value="ECO:0000318"/>
    <property type="project" value="GO_Central"/>
</dbReference>
<dbReference type="GO" id="GO:0006627">
    <property type="term" value="P:protein processing involved in protein targeting to mitochondrion"/>
    <property type="evidence" value="ECO:0000318"/>
    <property type="project" value="GO_Central"/>
</dbReference>
<dbReference type="CDD" id="cd06457">
    <property type="entry name" value="M3A_MIP"/>
    <property type="match status" value="1"/>
</dbReference>
<dbReference type="Gene3D" id="3.40.390.10">
    <property type="entry name" value="Collagenase (Catalytic Domain)"/>
    <property type="match status" value="1"/>
</dbReference>
<dbReference type="Gene3D" id="1.10.1370.10">
    <property type="entry name" value="Neurolysin, domain 3"/>
    <property type="match status" value="1"/>
</dbReference>
<dbReference type="InterPro" id="IPR033851">
    <property type="entry name" value="M3A_MIP"/>
</dbReference>
<dbReference type="InterPro" id="IPR024079">
    <property type="entry name" value="MetalloPept_cat_dom_sf"/>
</dbReference>
<dbReference type="InterPro" id="IPR024077">
    <property type="entry name" value="Neurolysin/TOP_dom2"/>
</dbReference>
<dbReference type="InterPro" id="IPR045090">
    <property type="entry name" value="Pept_M3A_M3B"/>
</dbReference>
<dbReference type="InterPro" id="IPR001567">
    <property type="entry name" value="Pept_M3A_M3B_dom"/>
</dbReference>
<dbReference type="PANTHER" id="PTHR11804:SF79">
    <property type="entry name" value="MITOCHONDRIAL INTERMEDIATE PEPTIDASE"/>
    <property type="match status" value="1"/>
</dbReference>
<dbReference type="PANTHER" id="PTHR11804">
    <property type="entry name" value="PROTEASE M3 THIMET OLIGOPEPTIDASE-RELATED"/>
    <property type="match status" value="1"/>
</dbReference>
<dbReference type="Pfam" id="PF01432">
    <property type="entry name" value="Peptidase_M3"/>
    <property type="match status" value="1"/>
</dbReference>
<dbReference type="SUPFAM" id="SSF55486">
    <property type="entry name" value="Metalloproteases ('zincins'), catalytic domain"/>
    <property type="match status" value="1"/>
</dbReference>
<dbReference type="PROSITE" id="PS00142">
    <property type="entry name" value="ZINC_PROTEASE"/>
    <property type="match status" value="1"/>
</dbReference>
<gene>
    <name type="primary">OCT2</name>
    <name type="ordered locus">CNB02140</name>
</gene>
<organism>
    <name type="scientific">Cryptococcus neoformans var. neoformans serotype D (strain JEC21 / ATCC MYA-565)</name>
    <name type="common">Filobasidiella neoformans</name>
    <dbReference type="NCBI Taxonomy" id="214684"/>
    <lineage>
        <taxon>Eukaryota</taxon>
        <taxon>Fungi</taxon>
        <taxon>Dikarya</taxon>
        <taxon>Basidiomycota</taxon>
        <taxon>Agaricomycotina</taxon>
        <taxon>Tremellomycetes</taxon>
        <taxon>Tremellales</taxon>
        <taxon>Cryptococcaceae</taxon>
        <taxon>Cryptococcus</taxon>
        <taxon>Cryptococcus neoformans species complex</taxon>
    </lineage>
</organism>
<proteinExistence type="inferred from homology"/>
<name>PMIP2_CRYNJ</name>
<protein>
    <recommendedName>
        <fullName>Mitochondrial intermediate peptidase 2</fullName>
        <shortName>MIP 2</shortName>
        <ecNumber>3.4.24.59</ecNumber>
    </recommendedName>
    <alternativeName>
        <fullName>Octapeptidyl aminopeptidase 2</fullName>
    </alternativeName>
</protein>
<comment type="function">
    <text evidence="1">Cleaves proteins, imported into the mitochondrion, to their mature size. While most mitochondrial precursor proteins are processed to the mature form in one step by mitochondrial processing peptidase (MPP), the sequential cleavage by MIP of an octapeptide after initial processing by MPP is a required step for a subgroup of nuclear-encoded precursor proteins destined for the matrix or the inner membrane (By similarity).</text>
</comment>
<comment type="catalytic activity">
    <reaction>
        <text>Release of an N-terminal octapeptide as second stage of processing of some proteins imported into the mitochondrion.</text>
        <dbReference type="EC" id="3.4.24.59"/>
    </reaction>
</comment>
<comment type="cofactor">
    <cofactor evidence="1">
        <name>Zn(2+)</name>
        <dbReference type="ChEBI" id="CHEBI:29105"/>
    </cofactor>
    <text evidence="1">Binds 1 zinc ion.</text>
</comment>
<comment type="subcellular location">
    <subcellularLocation>
        <location evidence="1">Mitochondrion matrix</location>
    </subcellularLocation>
</comment>
<comment type="similarity">
    <text evidence="5">Belongs to the peptidase M3 family.</text>
</comment>
<reference key="1">
    <citation type="journal article" date="2005" name="Science">
        <title>The genome of the basidiomycetous yeast and human pathogen Cryptococcus neoformans.</title>
        <authorList>
            <person name="Loftus B.J."/>
            <person name="Fung E."/>
            <person name="Roncaglia P."/>
            <person name="Rowley D."/>
            <person name="Amedeo P."/>
            <person name="Bruno D."/>
            <person name="Vamathevan J."/>
            <person name="Miranda M."/>
            <person name="Anderson I.J."/>
            <person name="Fraser J.A."/>
            <person name="Allen J.E."/>
            <person name="Bosdet I.E."/>
            <person name="Brent M.R."/>
            <person name="Chiu R."/>
            <person name="Doering T.L."/>
            <person name="Donlin M.J."/>
            <person name="D'Souza C.A."/>
            <person name="Fox D.S."/>
            <person name="Grinberg V."/>
            <person name="Fu J."/>
            <person name="Fukushima M."/>
            <person name="Haas B.J."/>
            <person name="Huang J.C."/>
            <person name="Janbon G."/>
            <person name="Jones S.J.M."/>
            <person name="Koo H.L."/>
            <person name="Krzywinski M.I."/>
            <person name="Kwon-Chung K.J."/>
            <person name="Lengeler K.B."/>
            <person name="Maiti R."/>
            <person name="Marra M.A."/>
            <person name="Marra R.E."/>
            <person name="Mathewson C.A."/>
            <person name="Mitchell T.G."/>
            <person name="Pertea M."/>
            <person name="Riggs F.R."/>
            <person name="Salzberg S.L."/>
            <person name="Schein J.E."/>
            <person name="Shvartsbeyn A."/>
            <person name="Shin H."/>
            <person name="Shumway M."/>
            <person name="Specht C.A."/>
            <person name="Suh B.B."/>
            <person name="Tenney A."/>
            <person name="Utterback T.R."/>
            <person name="Wickes B.L."/>
            <person name="Wortman J.R."/>
            <person name="Wye N.H."/>
            <person name="Kronstad J.W."/>
            <person name="Lodge J.K."/>
            <person name="Heitman J."/>
            <person name="Davis R.W."/>
            <person name="Fraser C.M."/>
            <person name="Hyman R.W."/>
        </authorList>
    </citation>
    <scope>NUCLEOTIDE SEQUENCE [LARGE SCALE GENOMIC DNA]</scope>
    <source>
        <strain>JEC21 / ATCC MYA-565</strain>
    </source>
</reference>
<feature type="transit peptide" description="Mitochondrion" evidence="2">
    <location>
        <begin position="1"/>
        <end position="33"/>
    </location>
</feature>
<feature type="chain" id="PRO_0000338582" description="Mitochondrial intermediate peptidase 2">
    <location>
        <begin position="34"/>
        <end position="823"/>
    </location>
</feature>
<feature type="region of interest" description="Disordered" evidence="4">
    <location>
        <begin position="532"/>
        <end position="553"/>
    </location>
</feature>
<feature type="active site" evidence="3">
    <location>
        <position position="596"/>
    </location>
</feature>
<feature type="binding site" evidence="3">
    <location>
        <position position="595"/>
    </location>
    <ligand>
        <name>Zn(2+)</name>
        <dbReference type="ChEBI" id="CHEBI:29105"/>
        <note>catalytic</note>
    </ligand>
</feature>
<feature type="binding site" evidence="3">
    <location>
        <position position="599"/>
    </location>
    <ligand>
        <name>Zn(2+)</name>
        <dbReference type="ChEBI" id="CHEBI:29105"/>
        <note>catalytic</note>
    </ligand>
</feature>
<feature type="binding site" evidence="3">
    <location>
        <position position="602"/>
    </location>
    <ligand>
        <name>Zn(2+)</name>
        <dbReference type="ChEBI" id="CHEBI:29105"/>
        <note>catalytic</note>
    </ligand>
</feature>
<accession>P0CQ20</accession>
<accession>Q55XK7</accession>
<accession>Q5KMC8</accession>
<evidence type="ECO:0000250" key="1"/>
<evidence type="ECO:0000255" key="2"/>
<evidence type="ECO:0000255" key="3">
    <source>
        <dbReference type="PROSITE-ProRule" id="PRU10095"/>
    </source>
</evidence>
<evidence type="ECO:0000256" key="4">
    <source>
        <dbReference type="SAM" id="MobiDB-lite"/>
    </source>
</evidence>
<evidence type="ECO:0000305" key="5"/>
<keyword id="KW-0378">Hydrolase</keyword>
<keyword id="KW-0479">Metal-binding</keyword>
<keyword id="KW-0482">Metalloprotease</keyword>
<keyword id="KW-0496">Mitochondrion</keyword>
<keyword id="KW-0645">Protease</keyword>
<keyword id="KW-1185">Reference proteome</keyword>
<keyword id="KW-0809">Transit peptide</keyword>
<keyword id="KW-0862">Zinc</keyword>
<sequence length="823" mass="92172">MRRLQQSLRRRSARRCPFILIPHRLLTTSYASYKPAPQATLEIEDTNSPTFLLKTSPIQLPARATSDDSAIKAHFDLPHSIFGDMVGVRREHVKGLFHYDSLTQPESLMRLTDRTLIQASAIVQRIVVAPQDPTGRELRLVVKNLDRLSDILCGVIDMCELIRNVHPHQDWVNQSDRTHQILCSFMNELNATRGLYESLAKAIAHPFNDPLTTSELRVARIFLTDFERSGIHLPPSVRERFVKHSDALLFLGRSFLSSASSGPSTVPHIEIPDPHRLLTGLGRQFVDSLPRTGRNGQAVIEPGSWEAQMILRYAREGRARELVYVGGMRADKKRISVLEAMLKERAELASVLGKNNWAEVVLVDKMTKTPENVMRFLTSLAQHHQPVARAEVDMLRRMKATALTGNYFDPRNSRTRHLPLFHAWDRDYYSDKYLTSLIPTGSPPSISPYLSTGTVMSGLSRIFSRLYGISFKPAVVSPGEVWHPSVRRLDVVHEEEGLIGVIYCDFFSRIGKSSGAAHYTVRCSRRVDDDDIDGDGLPEDWDKPYGPGLEADKESLSGKPGKYQLPIIALSMDVGTVNEGRPALLNWQELETLFHEMGHAIHSMIGRTEYHNVSGTRCATDFVELPSILMEHFVSSPEVLSTLAFHHATGEPLPIPVIEAHLALNQSLSALETHGQIAMALLDQKYHTLRHGQDSFDSTAIWFQLQQEIGVIQPVPGTAWQMQFGHLYGYGATYYSYLFDRAIAGKIWSTLFHRSGTSQAYDRKAEGILSREGGELLKEKVLKWGGGRDPWEMVGDVIGGVEGDELSKGDERALALVGSWSVV</sequence>